<protein>
    <recommendedName>
        <fullName>Serine protease 58</fullName>
        <ecNumber>3.4.21.4</ecNumber>
    </recommendedName>
    <alternativeName>
        <fullName>Trypsin-X3</fullName>
    </alternativeName>
</protein>
<gene>
    <name type="primary">PRSS58</name>
    <name type="synonym">TRY1</name>
    <name type="synonym">TRYX3</name>
    <name type="ORF">UNQ2540/PRO6090</name>
</gene>
<feature type="signal peptide" evidence="2">
    <location>
        <begin position="1"/>
        <end position="17"/>
    </location>
</feature>
<feature type="chain" id="PRO_0000317763" description="Serine protease 58">
    <location>
        <begin position="18"/>
        <end position="241"/>
    </location>
</feature>
<feature type="domain" description="Peptidase S1" evidence="3">
    <location>
        <begin position="18"/>
        <end position="239"/>
    </location>
</feature>
<feature type="active site" description="Charge relay system" evidence="1">
    <location>
        <position position="56"/>
    </location>
</feature>
<feature type="active site" description="Charge relay system" evidence="1">
    <location>
        <position position="101"/>
    </location>
</feature>
<feature type="active site" description="Charge relay system" evidence="1">
    <location>
        <position position="195"/>
    </location>
</feature>
<feature type="glycosylation site" description="N-linked (GlcNAc...) asparagine" evidence="2">
    <location>
        <position position="156"/>
    </location>
</feature>
<feature type="glycosylation site" description="N-linked (GlcNAc...) asparagine" evidence="2">
    <location>
        <position position="173"/>
    </location>
</feature>
<feature type="disulfide bond" evidence="3">
    <location>
        <begin position="41"/>
        <end position="57"/>
    </location>
</feature>
<feature type="disulfide bond" evidence="3">
    <location>
        <begin position="133"/>
        <end position="201"/>
    </location>
</feature>
<feature type="disulfide bond" evidence="3">
    <location>
        <begin position="165"/>
        <end position="180"/>
    </location>
</feature>
<feature type="disulfide bond" evidence="3">
    <location>
        <begin position="191"/>
        <end position="215"/>
    </location>
</feature>
<evidence type="ECO:0000250" key="1"/>
<evidence type="ECO:0000255" key="2"/>
<evidence type="ECO:0000255" key="3">
    <source>
        <dbReference type="PROSITE-ProRule" id="PRU00274"/>
    </source>
</evidence>
<evidence type="ECO:0000305" key="4"/>
<dbReference type="EC" id="3.4.21.4"/>
<dbReference type="EMBL" id="AK122940">
    <property type="protein sequence ID" value="BAG53808.1"/>
    <property type="molecule type" value="mRNA"/>
</dbReference>
<dbReference type="EMBL" id="DQ384426">
    <property type="protein sequence ID" value="ABD48876.1"/>
    <property type="molecule type" value="Genomic_DNA"/>
</dbReference>
<dbReference type="EMBL" id="DQ384427">
    <property type="protein sequence ID" value="ABD48877.1"/>
    <property type="molecule type" value="Genomic_DNA"/>
</dbReference>
<dbReference type="EMBL" id="DQ384428">
    <property type="protein sequence ID" value="ABD48878.1"/>
    <property type="molecule type" value="Genomic_DNA"/>
</dbReference>
<dbReference type="EMBL" id="DQ384429">
    <property type="protein sequence ID" value="ABD48879.1"/>
    <property type="molecule type" value="Genomic_DNA"/>
</dbReference>
<dbReference type="EMBL" id="DQ384431">
    <property type="protein sequence ID" value="ABD48880.1"/>
    <property type="molecule type" value="Genomic_DNA"/>
</dbReference>
<dbReference type="EMBL" id="AY358487">
    <property type="protein sequence ID" value="AAQ88851.1"/>
    <property type="molecule type" value="mRNA"/>
</dbReference>
<dbReference type="EMBL" id="CH236959">
    <property type="protein sequence ID" value="EAL23772.1"/>
    <property type="molecule type" value="Genomic_DNA"/>
</dbReference>
<dbReference type="EMBL" id="CH471198">
    <property type="protein sequence ID" value="EAW51980.1"/>
    <property type="molecule type" value="Genomic_DNA"/>
</dbReference>
<dbReference type="EMBL" id="CH471198">
    <property type="protein sequence ID" value="EAW51981.1"/>
    <property type="molecule type" value="Genomic_DNA"/>
</dbReference>
<dbReference type="EMBL" id="BC035384">
    <property type="protein sequence ID" value="AAH35384.1"/>
    <property type="molecule type" value="mRNA"/>
</dbReference>
<dbReference type="CCDS" id="CCDS5871.1"/>
<dbReference type="RefSeq" id="NP_001001317.1">
    <property type="nucleotide sequence ID" value="NM_001001317.5"/>
</dbReference>
<dbReference type="SMR" id="Q8IYP2"/>
<dbReference type="BioGRID" id="126461">
    <property type="interactions" value="1"/>
</dbReference>
<dbReference type="FunCoup" id="Q8IYP2">
    <property type="interactions" value="50"/>
</dbReference>
<dbReference type="STRING" id="9606.ENSP00000446916"/>
<dbReference type="MEROPS" id="S01.085"/>
<dbReference type="GlyCosmos" id="Q8IYP2">
    <property type="glycosylation" value="2 sites, No reported glycans"/>
</dbReference>
<dbReference type="GlyGen" id="Q8IYP2">
    <property type="glycosylation" value="2 sites"/>
</dbReference>
<dbReference type="iPTMnet" id="Q8IYP2"/>
<dbReference type="PhosphoSitePlus" id="Q8IYP2"/>
<dbReference type="BioMuta" id="PRSS58"/>
<dbReference type="DMDM" id="74759717"/>
<dbReference type="MassIVE" id="Q8IYP2"/>
<dbReference type="PaxDb" id="9606-ENSP00000446916"/>
<dbReference type="PeptideAtlas" id="Q8IYP2"/>
<dbReference type="ProteomicsDB" id="71211"/>
<dbReference type="Antibodypedia" id="50270">
    <property type="antibodies" value="30 antibodies from 8 providers"/>
</dbReference>
<dbReference type="DNASU" id="136541"/>
<dbReference type="Ensembl" id="ENST00000547058.6">
    <property type="protein sequence ID" value="ENSP00000447588.2"/>
    <property type="gene ID" value="ENSG00000258223.6"/>
</dbReference>
<dbReference type="Ensembl" id="ENST00000552471.1">
    <property type="protein sequence ID" value="ENSP00000446916.1"/>
    <property type="gene ID" value="ENSG00000258223.6"/>
</dbReference>
<dbReference type="Ensembl" id="ENST00000621886.4">
    <property type="protein sequence ID" value="ENSP00000478535.1"/>
    <property type="gene ID" value="ENSG00000276785.4"/>
</dbReference>
<dbReference type="Ensembl" id="ENST00000622880.1">
    <property type="protein sequence ID" value="ENSP00000479165.1"/>
    <property type="gene ID" value="ENSG00000276785.4"/>
</dbReference>
<dbReference type="GeneID" id="136541"/>
<dbReference type="KEGG" id="hsa:136541"/>
<dbReference type="MANE-Select" id="ENST00000547058.6">
    <property type="protein sequence ID" value="ENSP00000447588.2"/>
    <property type="RefSeq nucleotide sequence ID" value="NM_001001317.5"/>
    <property type="RefSeq protein sequence ID" value="NP_001001317.1"/>
</dbReference>
<dbReference type="UCSC" id="uc003vxb.4">
    <property type="organism name" value="human"/>
</dbReference>
<dbReference type="AGR" id="HGNC:39125"/>
<dbReference type="CTD" id="136541"/>
<dbReference type="DisGeNET" id="136541"/>
<dbReference type="GeneCards" id="PRSS58"/>
<dbReference type="HGNC" id="HGNC:39125">
    <property type="gene designation" value="PRSS58"/>
</dbReference>
<dbReference type="HPA" id="ENSG00000258223">
    <property type="expression patterns" value="Tissue enriched (testis)"/>
</dbReference>
<dbReference type="neXtProt" id="NX_Q8IYP2"/>
<dbReference type="OpenTargets" id="ENSG00000258223"/>
<dbReference type="VEuPathDB" id="HostDB:ENSG00000258223"/>
<dbReference type="eggNOG" id="KOG3627">
    <property type="taxonomic scope" value="Eukaryota"/>
</dbReference>
<dbReference type="GeneTree" id="ENSGT01020000230389"/>
<dbReference type="HOGENOM" id="CLU_006842_1_6_1"/>
<dbReference type="InParanoid" id="Q8IYP2"/>
<dbReference type="OMA" id="IEYDLML"/>
<dbReference type="OrthoDB" id="10059102at2759"/>
<dbReference type="PAN-GO" id="Q8IYP2">
    <property type="GO annotations" value="1 GO annotation based on evolutionary models"/>
</dbReference>
<dbReference type="PhylomeDB" id="Q8IYP2"/>
<dbReference type="TreeFam" id="TF331065"/>
<dbReference type="PathwayCommons" id="Q8IYP2"/>
<dbReference type="BioGRID-ORCS" id="136541">
    <property type="hits" value="12 hits in 1139 CRISPR screens"/>
</dbReference>
<dbReference type="GenomeRNAi" id="136541"/>
<dbReference type="Pharos" id="Q8IYP2">
    <property type="development level" value="Tdark"/>
</dbReference>
<dbReference type="PRO" id="PR:Q8IYP2"/>
<dbReference type="Proteomes" id="UP000005640">
    <property type="component" value="Chromosome 7"/>
</dbReference>
<dbReference type="RNAct" id="Q8IYP2">
    <property type="molecule type" value="protein"/>
</dbReference>
<dbReference type="Bgee" id="ENSG00000258223">
    <property type="expression patterns" value="Expressed in male germ line stem cell (sensu Vertebrata) in testis and 17 other cell types or tissues"/>
</dbReference>
<dbReference type="GO" id="GO:0005615">
    <property type="term" value="C:extracellular space"/>
    <property type="evidence" value="ECO:0000318"/>
    <property type="project" value="GO_Central"/>
</dbReference>
<dbReference type="GO" id="GO:0030141">
    <property type="term" value="C:secretory granule"/>
    <property type="evidence" value="ECO:0000318"/>
    <property type="project" value="GO_Central"/>
</dbReference>
<dbReference type="GO" id="GO:0004252">
    <property type="term" value="F:serine-type endopeptidase activity"/>
    <property type="evidence" value="ECO:0000318"/>
    <property type="project" value="GO_Central"/>
</dbReference>
<dbReference type="GO" id="GO:0051604">
    <property type="term" value="P:protein maturation"/>
    <property type="evidence" value="ECO:0000318"/>
    <property type="project" value="GO_Central"/>
</dbReference>
<dbReference type="GO" id="GO:0006508">
    <property type="term" value="P:proteolysis"/>
    <property type="evidence" value="ECO:0007669"/>
    <property type="project" value="UniProtKB-KW"/>
</dbReference>
<dbReference type="CDD" id="cd00190">
    <property type="entry name" value="Tryp_SPc"/>
    <property type="match status" value="1"/>
</dbReference>
<dbReference type="FunFam" id="2.40.10.10:FF:000049">
    <property type="entry name" value="probable inactive serine protease 37"/>
    <property type="match status" value="1"/>
</dbReference>
<dbReference type="FunFam" id="2.40.10.10:FF:000005">
    <property type="entry name" value="Serine protease 37"/>
    <property type="match status" value="1"/>
</dbReference>
<dbReference type="Gene3D" id="2.40.10.10">
    <property type="entry name" value="Trypsin-like serine proteases"/>
    <property type="match status" value="2"/>
</dbReference>
<dbReference type="InterPro" id="IPR009003">
    <property type="entry name" value="Peptidase_S1_PA"/>
</dbReference>
<dbReference type="InterPro" id="IPR043504">
    <property type="entry name" value="Peptidase_S1_PA_chymotrypsin"/>
</dbReference>
<dbReference type="InterPro" id="IPR001314">
    <property type="entry name" value="Peptidase_S1A"/>
</dbReference>
<dbReference type="InterPro" id="IPR001254">
    <property type="entry name" value="Trypsin_dom"/>
</dbReference>
<dbReference type="InterPro" id="IPR018114">
    <property type="entry name" value="TRYPSIN_HIS"/>
</dbReference>
<dbReference type="PANTHER" id="PTHR24271">
    <property type="entry name" value="KALLIKREIN-RELATED"/>
    <property type="match status" value="1"/>
</dbReference>
<dbReference type="PANTHER" id="PTHR24271:SF56">
    <property type="entry name" value="SERINE PROTEASE 58"/>
    <property type="match status" value="1"/>
</dbReference>
<dbReference type="Pfam" id="PF00089">
    <property type="entry name" value="Trypsin"/>
    <property type="match status" value="1"/>
</dbReference>
<dbReference type="PRINTS" id="PR00722">
    <property type="entry name" value="CHYMOTRYPSIN"/>
</dbReference>
<dbReference type="SMART" id="SM00020">
    <property type="entry name" value="Tryp_SPc"/>
    <property type="match status" value="1"/>
</dbReference>
<dbReference type="SUPFAM" id="SSF50494">
    <property type="entry name" value="Trypsin-like serine proteases"/>
    <property type="match status" value="1"/>
</dbReference>
<dbReference type="PROSITE" id="PS50240">
    <property type="entry name" value="TRYPSIN_DOM"/>
    <property type="match status" value="1"/>
</dbReference>
<dbReference type="PROSITE" id="PS00134">
    <property type="entry name" value="TRYPSIN_HIS"/>
    <property type="match status" value="1"/>
</dbReference>
<sequence length="241" mass="27085">MKFILLWALLNLTVALAFNPDYTVSSTPPYLVYLKSDYLPCAGVLIHPLWVITAAHCNLPKLRVILGVTIPADSNEKHLQVIGYEKMIHHPHFSVTSIDHDIMLIKLKTEAELNDYVKLANLPYQTISENTMCSVSTWSYNVCDIYKEPDSLQTVNISVISKPQCRDAYKTYNITENMLCVGIVPGRRQPCKEVSAAPAICNGMLQGILSFADGCVLRADVGIYAKIFYYIPWIENVIQNN</sequence>
<reference key="1">
    <citation type="journal article" date="2004" name="Nat. Genet.">
        <title>Complete sequencing and characterization of 21,243 full-length human cDNAs.</title>
        <authorList>
            <person name="Ota T."/>
            <person name="Suzuki Y."/>
            <person name="Nishikawa T."/>
            <person name="Otsuki T."/>
            <person name="Sugiyama T."/>
            <person name="Irie R."/>
            <person name="Wakamatsu A."/>
            <person name="Hayashi K."/>
            <person name="Sato H."/>
            <person name="Nagai K."/>
            <person name="Kimura K."/>
            <person name="Makita H."/>
            <person name="Sekine M."/>
            <person name="Obayashi M."/>
            <person name="Nishi T."/>
            <person name="Shibahara T."/>
            <person name="Tanaka T."/>
            <person name="Ishii S."/>
            <person name="Yamamoto J."/>
            <person name="Saito K."/>
            <person name="Kawai Y."/>
            <person name="Isono Y."/>
            <person name="Nakamura Y."/>
            <person name="Nagahari K."/>
            <person name="Murakami K."/>
            <person name="Yasuda T."/>
            <person name="Iwayanagi T."/>
            <person name="Wagatsuma M."/>
            <person name="Shiratori A."/>
            <person name="Sudo H."/>
            <person name="Hosoiri T."/>
            <person name="Kaku Y."/>
            <person name="Kodaira H."/>
            <person name="Kondo H."/>
            <person name="Sugawara M."/>
            <person name="Takahashi M."/>
            <person name="Kanda K."/>
            <person name="Yokoi T."/>
            <person name="Furuya T."/>
            <person name="Kikkawa E."/>
            <person name="Omura Y."/>
            <person name="Abe K."/>
            <person name="Kamihara K."/>
            <person name="Katsuta N."/>
            <person name="Sato K."/>
            <person name="Tanikawa M."/>
            <person name="Yamazaki M."/>
            <person name="Ninomiya K."/>
            <person name="Ishibashi T."/>
            <person name="Yamashita H."/>
            <person name="Murakawa K."/>
            <person name="Fujimori K."/>
            <person name="Tanai H."/>
            <person name="Kimata M."/>
            <person name="Watanabe M."/>
            <person name="Hiraoka S."/>
            <person name="Chiba Y."/>
            <person name="Ishida S."/>
            <person name="Ono Y."/>
            <person name="Takiguchi S."/>
            <person name="Watanabe S."/>
            <person name="Yosida M."/>
            <person name="Hotuta T."/>
            <person name="Kusano J."/>
            <person name="Kanehori K."/>
            <person name="Takahashi-Fujii A."/>
            <person name="Hara H."/>
            <person name="Tanase T.-O."/>
            <person name="Nomura Y."/>
            <person name="Togiya S."/>
            <person name="Komai F."/>
            <person name="Hara R."/>
            <person name="Takeuchi K."/>
            <person name="Arita M."/>
            <person name="Imose N."/>
            <person name="Musashino K."/>
            <person name="Yuuki H."/>
            <person name="Oshima A."/>
            <person name="Sasaki N."/>
            <person name="Aotsuka S."/>
            <person name="Yoshikawa Y."/>
            <person name="Matsunawa H."/>
            <person name="Ichihara T."/>
            <person name="Shiohata N."/>
            <person name="Sano S."/>
            <person name="Moriya S."/>
            <person name="Momiyama H."/>
            <person name="Satoh N."/>
            <person name="Takami S."/>
            <person name="Terashima Y."/>
            <person name="Suzuki O."/>
            <person name="Nakagawa S."/>
            <person name="Senoh A."/>
            <person name="Mizoguchi H."/>
            <person name="Goto Y."/>
            <person name="Shimizu F."/>
            <person name="Wakebe H."/>
            <person name="Hishigaki H."/>
            <person name="Watanabe T."/>
            <person name="Sugiyama A."/>
            <person name="Takemoto M."/>
            <person name="Kawakami B."/>
            <person name="Yamazaki M."/>
            <person name="Watanabe K."/>
            <person name="Kumagai A."/>
            <person name="Itakura S."/>
            <person name="Fukuzumi Y."/>
            <person name="Fujimori Y."/>
            <person name="Komiyama M."/>
            <person name="Tashiro H."/>
            <person name="Tanigami A."/>
            <person name="Fujiwara T."/>
            <person name="Ono T."/>
            <person name="Yamada K."/>
            <person name="Fujii Y."/>
            <person name="Ozaki K."/>
            <person name="Hirao M."/>
            <person name="Ohmori Y."/>
            <person name="Kawabata A."/>
            <person name="Hikiji T."/>
            <person name="Kobatake N."/>
            <person name="Inagaki H."/>
            <person name="Ikema Y."/>
            <person name="Okamoto S."/>
            <person name="Okitani R."/>
            <person name="Kawakami T."/>
            <person name="Noguchi S."/>
            <person name="Itoh T."/>
            <person name="Shigeta K."/>
            <person name="Senba T."/>
            <person name="Matsumura K."/>
            <person name="Nakajima Y."/>
            <person name="Mizuno T."/>
            <person name="Morinaga M."/>
            <person name="Sasaki M."/>
            <person name="Togashi T."/>
            <person name="Oyama M."/>
            <person name="Hata H."/>
            <person name="Watanabe M."/>
            <person name="Komatsu T."/>
            <person name="Mizushima-Sugano J."/>
            <person name="Satoh T."/>
            <person name="Shirai Y."/>
            <person name="Takahashi Y."/>
            <person name="Nakagawa K."/>
            <person name="Okumura K."/>
            <person name="Nagase T."/>
            <person name="Nomura N."/>
            <person name="Kikuchi H."/>
            <person name="Masuho Y."/>
            <person name="Yamashita R."/>
            <person name="Nakai K."/>
            <person name="Yada T."/>
            <person name="Nakamura Y."/>
            <person name="Ohara O."/>
            <person name="Isogai T."/>
            <person name="Sugano S."/>
        </authorList>
    </citation>
    <scope>NUCLEOTIDE SEQUENCE [LARGE SCALE MRNA]</scope>
    <source>
        <tissue>Testis</tissue>
    </source>
</reference>
<reference key="2">
    <citation type="journal article" date="2006" name="Genetics">
        <title>Scan of human genome reveals no new loci under ancient balancing selection.</title>
        <authorList>
            <person name="Bubb K.L."/>
            <person name="Bovee D."/>
            <person name="Buckley D."/>
            <person name="Haugen E."/>
            <person name="Kibukawa M."/>
            <person name="Paddock M."/>
            <person name="Palmieri A."/>
            <person name="Subramanian S."/>
            <person name="Zhou Y."/>
            <person name="Kaul R."/>
            <person name="Green P."/>
            <person name="Olson M.V."/>
        </authorList>
    </citation>
    <scope>NUCLEOTIDE SEQUENCE [GENOMIC DNA]</scope>
</reference>
<reference key="3">
    <citation type="journal article" date="2003" name="Genome Res.">
        <title>The secreted protein discovery initiative (SPDI), a large-scale effort to identify novel human secreted and transmembrane proteins: a bioinformatics assessment.</title>
        <authorList>
            <person name="Clark H.F."/>
            <person name="Gurney A.L."/>
            <person name="Abaya E."/>
            <person name="Baker K."/>
            <person name="Baldwin D.T."/>
            <person name="Brush J."/>
            <person name="Chen J."/>
            <person name="Chow B."/>
            <person name="Chui C."/>
            <person name="Crowley C."/>
            <person name="Currell B."/>
            <person name="Deuel B."/>
            <person name="Dowd P."/>
            <person name="Eaton D."/>
            <person name="Foster J.S."/>
            <person name="Grimaldi C."/>
            <person name="Gu Q."/>
            <person name="Hass P.E."/>
            <person name="Heldens S."/>
            <person name="Huang A."/>
            <person name="Kim H.S."/>
            <person name="Klimowski L."/>
            <person name="Jin Y."/>
            <person name="Johnson S."/>
            <person name="Lee J."/>
            <person name="Lewis L."/>
            <person name="Liao D."/>
            <person name="Mark M.R."/>
            <person name="Robbie E."/>
            <person name="Sanchez C."/>
            <person name="Schoenfeld J."/>
            <person name="Seshagiri S."/>
            <person name="Simmons L."/>
            <person name="Singh J."/>
            <person name="Smith V."/>
            <person name="Stinson J."/>
            <person name="Vagts A."/>
            <person name="Vandlen R.L."/>
            <person name="Watanabe C."/>
            <person name="Wieand D."/>
            <person name="Woods K."/>
            <person name="Xie M.-H."/>
            <person name="Yansura D.G."/>
            <person name="Yi S."/>
            <person name="Yu G."/>
            <person name="Yuan J."/>
            <person name="Zhang M."/>
            <person name="Zhang Z."/>
            <person name="Goddard A.D."/>
            <person name="Wood W.I."/>
            <person name="Godowski P.J."/>
            <person name="Gray A.M."/>
        </authorList>
    </citation>
    <scope>NUCLEOTIDE SEQUENCE [LARGE SCALE MRNA]</scope>
</reference>
<reference key="4">
    <citation type="journal article" date="2003" name="Science">
        <title>Human chromosome 7: DNA sequence and biology.</title>
        <authorList>
            <person name="Scherer S.W."/>
            <person name="Cheung J."/>
            <person name="MacDonald J.R."/>
            <person name="Osborne L.R."/>
            <person name="Nakabayashi K."/>
            <person name="Herbrick J.-A."/>
            <person name="Carson A.R."/>
            <person name="Parker-Katiraee L."/>
            <person name="Skaug J."/>
            <person name="Khaja R."/>
            <person name="Zhang J."/>
            <person name="Hudek A.K."/>
            <person name="Li M."/>
            <person name="Haddad M."/>
            <person name="Duggan G.E."/>
            <person name="Fernandez B.A."/>
            <person name="Kanematsu E."/>
            <person name="Gentles S."/>
            <person name="Christopoulos C.C."/>
            <person name="Choufani S."/>
            <person name="Kwasnicka D."/>
            <person name="Zheng X.H."/>
            <person name="Lai Z."/>
            <person name="Nusskern D.R."/>
            <person name="Zhang Q."/>
            <person name="Gu Z."/>
            <person name="Lu F."/>
            <person name="Zeesman S."/>
            <person name="Nowaczyk M.J."/>
            <person name="Teshima I."/>
            <person name="Chitayat D."/>
            <person name="Shuman C."/>
            <person name="Weksberg R."/>
            <person name="Zackai E.H."/>
            <person name="Grebe T.A."/>
            <person name="Cox S.R."/>
            <person name="Kirkpatrick S.J."/>
            <person name="Rahman N."/>
            <person name="Friedman J.M."/>
            <person name="Heng H.H.Q."/>
            <person name="Pelicci P.G."/>
            <person name="Lo-Coco F."/>
            <person name="Belloni E."/>
            <person name="Shaffer L.G."/>
            <person name="Pober B."/>
            <person name="Morton C.C."/>
            <person name="Gusella J.F."/>
            <person name="Bruns G.A.P."/>
            <person name="Korf B.R."/>
            <person name="Quade B.J."/>
            <person name="Ligon A.H."/>
            <person name="Ferguson H."/>
            <person name="Higgins A.W."/>
            <person name="Leach N.T."/>
            <person name="Herrick S.R."/>
            <person name="Lemyre E."/>
            <person name="Farra C.G."/>
            <person name="Kim H.-G."/>
            <person name="Summers A.M."/>
            <person name="Gripp K.W."/>
            <person name="Roberts W."/>
            <person name="Szatmari P."/>
            <person name="Winsor E.J.T."/>
            <person name="Grzeschik K.-H."/>
            <person name="Teebi A."/>
            <person name="Minassian B.A."/>
            <person name="Kere J."/>
            <person name="Armengol L."/>
            <person name="Pujana M.A."/>
            <person name="Estivill X."/>
            <person name="Wilson M.D."/>
            <person name="Koop B.F."/>
            <person name="Tosi S."/>
            <person name="Moore G.E."/>
            <person name="Boright A.P."/>
            <person name="Zlotorynski E."/>
            <person name="Kerem B."/>
            <person name="Kroisel P.M."/>
            <person name="Petek E."/>
            <person name="Oscier D.G."/>
            <person name="Mould S.J."/>
            <person name="Doehner H."/>
            <person name="Doehner K."/>
            <person name="Rommens J.M."/>
            <person name="Vincent J.B."/>
            <person name="Venter J.C."/>
            <person name="Li P.W."/>
            <person name="Mural R.J."/>
            <person name="Adams M.D."/>
            <person name="Tsui L.-C."/>
        </authorList>
    </citation>
    <scope>NUCLEOTIDE SEQUENCE [LARGE SCALE GENOMIC DNA]</scope>
</reference>
<reference key="5">
    <citation type="submission" date="2005-09" db="EMBL/GenBank/DDBJ databases">
        <authorList>
            <person name="Mural R.J."/>
            <person name="Istrail S."/>
            <person name="Sutton G.G."/>
            <person name="Florea L."/>
            <person name="Halpern A.L."/>
            <person name="Mobarry C.M."/>
            <person name="Lippert R."/>
            <person name="Walenz B."/>
            <person name="Shatkay H."/>
            <person name="Dew I."/>
            <person name="Miller J.R."/>
            <person name="Flanigan M.J."/>
            <person name="Edwards N.J."/>
            <person name="Bolanos R."/>
            <person name="Fasulo D."/>
            <person name="Halldorsson B.V."/>
            <person name="Hannenhalli S."/>
            <person name="Turner R."/>
            <person name="Yooseph S."/>
            <person name="Lu F."/>
            <person name="Nusskern D.R."/>
            <person name="Shue B.C."/>
            <person name="Zheng X.H."/>
            <person name="Zhong F."/>
            <person name="Delcher A.L."/>
            <person name="Huson D.H."/>
            <person name="Kravitz S.A."/>
            <person name="Mouchard L."/>
            <person name="Reinert K."/>
            <person name="Remington K.A."/>
            <person name="Clark A.G."/>
            <person name="Waterman M.S."/>
            <person name="Eichler E.E."/>
            <person name="Adams M.D."/>
            <person name="Hunkapiller M.W."/>
            <person name="Myers E.W."/>
            <person name="Venter J.C."/>
        </authorList>
    </citation>
    <scope>NUCLEOTIDE SEQUENCE [LARGE SCALE GENOMIC DNA]</scope>
</reference>
<reference key="6">
    <citation type="journal article" date="2004" name="Genome Res.">
        <title>The status, quality, and expansion of the NIH full-length cDNA project: the Mammalian Gene Collection (MGC).</title>
        <authorList>
            <consortium name="The MGC Project Team"/>
        </authorList>
    </citation>
    <scope>NUCLEOTIDE SEQUENCE [LARGE SCALE MRNA]</scope>
    <source>
        <tissue>Brain</tissue>
    </source>
</reference>
<comment type="catalytic activity">
    <reaction>
        <text>Preferential cleavage: Arg-|-Xaa, Lys-|-Xaa.</text>
        <dbReference type="EC" id="3.4.21.4"/>
    </reaction>
</comment>
<comment type="subcellular location">
    <subcellularLocation>
        <location evidence="4">Secreted</location>
    </subcellularLocation>
</comment>
<comment type="similarity">
    <text evidence="3">Belongs to the peptidase S1 family.</text>
</comment>
<keyword id="KW-1015">Disulfide bond</keyword>
<keyword id="KW-0325">Glycoprotein</keyword>
<keyword id="KW-0378">Hydrolase</keyword>
<keyword id="KW-0645">Protease</keyword>
<keyword id="KW-1267">Proteomics identification</keyword>
<keyword id="KW-1185">Reference proteome</keyword>
<keyword id="KW-0964">Secreted</keyword>
<keyword id="KW-0720">Serine protease</keyword>
<keyword id="KW-0732">Signal</keyword>
<organism>
    <name type="scientific">Homo sapiens</name>
    <name type="common">Human</name>
    <dbReference type="NCBI Taxonomy" id="9606"/>
    <lineage>
        <taxon>Eukaryota</taxon>
        <taxon>Metazoa</taxon>
        <taxon>Chordata</taxon>
        <taxon>Craniata</taxon>
        <taxon>Vertebrata</taxon>
        <taxon>Euteleostomi</taxon>
        <taxon>Mammalia</taxon>
        <taxon>Eutheria</taxon>
        <taxon>Euarchontoglires</taxon>
        <taxon>Primates</taxon>
        <taxon>Haplorrhini</taxon>
        <taxon>Catarrhini</taxon>
        <taxon>Hominidae</taxon>
        <taxon>Homo</taxon>
    </lineage>
</organism>
<accession>Q8IYP2</accession>
<accession>B3KVJ6</accession>
<accession>D3DXD2</accession>
<proteinExistence type="evidence at protein level"/>
<name>PRS58_HUMAN</name>